<feature type="chain" id="PRO_1000132212" description="Probable transcriptional regulatory protein Mpop_0922">
    <location>
        <begin position="1"/>
        <end position="248"/>
    </location>
</feature>
<accession>B1Z942</accession>
<comment type="subcellular location">
    <subcellularLocation>
        <location evidence="1">Cytoplasm</location>
    </subcellularLocation>
</comment>
<comment type="similarity">
    <text evidence="1">Belongs to the TACO1 family.</text>
</comment>
<organism>
    <name type="scientific">Methylorubrum populi (strain ATCC BAA-705 / NCIMB 13946 / BJ001)</name>
    <name type="common">Methylobacterium populi</name>
    <dbReference type="NCBI Taxonomy" id="441620"/>
    <lineage>
        <taxon>Bacteria</taxon>
        <taxon>Pseudomonadati</taxon>
        <taxon>Pseudomonadota</taxon>
        <taxon>Alphaproteobacteria</taxon>
        <taxon>Hyphomicrobiales</taxon>
        <taxon>Methylobacteriaceae</taxon>
        <taxon>Methylorubrum</taxon>
    </lineage>
</organism>
<reference key="1">
    <citation type="submission" date="2008-04" db="EMBL/GenBank/DDBJ databases">
        <title>Complete sequence of chromosome of Methylobacterium populi BJ001.</title>
        <authorList>
            <consortium name="US DOE Joint Genome Institute"/>
            <person name="Copeland A."/>
            <person name="Lucas S."/>
            <person name="Lapidus A."/>
            <person name="Glavina del Rio T."/>
            <person name="Dalin E."/>
            <person name="Tice H."/>
            <person name="Bruce D."/>
            <person name="Goodwin L."/>
            <person name="Pitluck S."/>
            <person name="Chertkov O."/>
            <person name="Brettin T."/>
            <person name="Detter J.C."/>
            <person name="Han C."/>
            <person name="Kuske C.R."/>
            <person name="Schmutz J."/>
            <person name="Larimer F."/>
            <person name="Land M."/>
            <person name="Hauser L."/>
            <person name="Kyrpides N."/>
            <person name="Mikhailova N."/>
            <person name="Marx C."/>
            <person name="Richardson P."/>
        </authorList>
    </citation>
    <scope>NUCLEOTIDE SEQUENCE [LARGE SCALE GENOMIC DNA]</scope>
    <source>
        <strain>ATCC BAA-705 / NCIMB 13946 / BJ001</strain>
    </source>
</reference>
<name>Y922_METPB</name>
<proteinExistence type="inferred from homology"/>
<evidence type="ECO:0000255" key="1">
    <source>
        <dbReference type="HAMAP-Rule" id="MF_00693"/>
    </source>
</evidence>
<keyword id="KW-0963">Cytoplasm</keyword>
<keyword id="KW-0238">DNA-binding</keyword>
<keyword id="KW-0804">Transcription</keyword>
<keyword id="KW-0805">Transcription regulation</keyword>
<dbReference type="EMBL" id="CP001029">
    <property type="protein sequence ID" value="ACB79100.1"/>
    <property type="molecule type" value="Genomic_DNA"/>
</dbReference>
<dbReference type="RefSeq" id="WP_012452855.1">
    <property type="nucleotide sequence ID" value="NC_010725.1"/>
</dbReference>
<dbReference type="SMR" id="B1Z942"/>
<dbReference type="STRING" id="441620.Mpop_0922"/>
<dbReference type="KEGG" id="mpo:Mpop_0922"/>
<dbReference type="eggNOG" id="COG0217">
    <property type="taxonomic scope" value="Bacteria"/>
</dbReference>
<dbReference type="HOGENOM" id="CLU_062974_2_2_5"/>
<dbReference type="OrthoDB" id="9781053at2"/>
<dbReference type="Proteomes" id="UP000007136">
    <property type="component" value="Chromosome"/>
</dbReference>
<dbReference type="GO" id="GO:0005829">
    <property type="term" value="C:cytosol"/>
    <property type="evidence" value="ECO:0007669"/>
    <property type="project" value="TreeGrafter"/>
</dbReference>
<dbReference type="GO" id="GO:0003677">
    <property type="term" value="F:DNA binding"/>
    <property type="evidence" value="ECO:0007669"/>
    <property type="project" value="UniProtKB-UniRule"/>
</dbReference>
<dbReference type="GO" id="GO:0006355">
    <property type="term" value="P:regulation of DNA-templated transcription"/>
    <property type="evidence" value="ECO:0007669"/>
    <property type="project" value="UniProtKB-UniRule"/>
</dbReference>
<dbReference type="FunFam" id="1.10.10.200:FF:000002">
    <property type="entry name" value="Probable transcriptional regulatory protein CLM62_37755"/>
    <property type="match status" value="1"/>
</dbReference>
<dbReference type="Gene3D" id="1.10.10.200">
    <property type="match status" value="1"/>
</dbReference>
<dbReference type="Gene3D" id="3.30.70.980">
    <property type="match status" value="2"/>
</dbReference>
<dbReference type="HAMAP" id="MF_00693">
    <property type="entry name" value="Transcrip_reg_TACO1"/>
    <property type="match status" value="1"/>
</dbReference>
<dbReference type="InterPro" id="IPR017856">
    <property type="entry name" value="Integrase-like_N"/>
</dbReference>
<dbReference type="InterPro" id="IPR048300">
    <property type="entry name" value="TACO1_YebC-like_2nd/3rd_dom"/>
</dbReference>
<dbReference type="InterPro" id="IPR049083">
    <property type="entry name" value="TACO1_YebC_N"/>
</dbReference>
<dbReference type="InterPro" id="IPR002876">
    <property type="entry name" value="Transcrip_reg_TACO1-like"/>
</dbReference>
<dbReference type="InterPro" id="IPR026564">
    <property type="entry name" value="Transcrip_reg_TACO1-like_dom3"/>
</dbReference>
<dbReference type="InterPro" id="IPR029072">
    <property type="entry name" value="YebC-like"/>
</dbReference>
<dbReference type="NCBIfam" id="NF001030">
    <property type="entry name" value="PRK00110.1"/>
    <property type="match status" value="1"/>
</dbReference>
<dbReference type="NCBIfam" id="NF009044">
    <property type="entry name" value="PRK12378.1"/>
    <property type="match status" value="1"/>
</dbReference>
<dbReference type="NCBIfam" id="TIGR01033">
    <property type="entry name" value="YebC/PmpR family DNA-binding transcriptional regulator"/>
    <property type="match status" value="1"/>
</dbReference>
<dbReference type="PANTHER" id="PTHR12532:SF6">
    <property type="entry name" value="TRANSCRIPTIONAL REGULATORY PROTEIN YEBC-RELATED"/>
    <property type="match status" value="1"/>
</dbReference>
<dbReference type="PANTHER" id="PTHR12532">
    <property type="entry name" value="TRANSLATIONAL ACTIVATOR OF CYTOCHROME C OXIDASE 1"/>
    <property type="match status" value="1"/>
</dbReference>
<dbReference type="Pfam" id="PF20772">
    <property type="entry name" value="TACO1_YebC_N"/>
    <property type="match status" value="1"/>
</dbReference>
<dbReference type="Pfam" id="PF01709">
    <property type="entry name" value="Transcrip_reg"/>
    <property type="match status" value="1"/>
</dbReference>
<dbReference type="SUPFAM" id="SSF75625">
    <property type="entry name" value="YebC-like"/>
    <property type="match status" value="1"/>
</dbReference>
<protein>
    <recommendedName>
        <fullName evidence="1">Probable transcriptional regulatory protein Mpop_0922</fullName>
    </recommendedName>
</protein>
<sequence>MAGHSQFKNIMHRKGRVDAVRSKVFSKLAREITVAAKLGTPDPSMNPRLRAAILAARAENMPKDNIERAIKKAVGNDGENYEEIRYEGYGPGGAALIVEAQTDNRNRTASDVRSAFTKSGGSLAETGAVAFMFDRVGVIAFAADVADADTMLEAAIEAGADDVRSDADGHEITCAQDAYGEVSKALEARFGEPRRTGLIWKAQNTIDVDDETGEKLIRLVEVIEDQDDVQNVYVNFALSDALVEKMGA</sequence>
<gene>
    <name type="ordered locus">Mpop_0922</name>
</gene>